<protein>
    <recommendedName>
        <fullName evidence="1">Large ribosomal subunit protein uL2</fullName>
    </recommendedName>
    <alternativeName>
        <fullName evidence="3">50S ribosomal protein L2</fullName>
    </alternativeName>
</protein>
<name>RL2_OLEA2</name>
<dbReference type="EMBL" id="CP000112">
    <property type="protein sequence ID" value="ABB39051.1"/>
    <property type="molecule type" value="Genomic_DNA"/>
</dbReference>
<dbReference type="RefSeq" id="WP_011368142.1">
    <property type="nucleotide sequence ID" value="NC_007519.1"/>
</dbReference>
<dbReference type="SMR" id="Q30Z45"/>
<dbReference type="STRING" id="207559.Dde_2254"/>
<dbReference type="KEGG" id="dde:Dde_2254"/>
<dbReference type="eggNOG" id="COG0090">
    <property type="taxonomic scope" value="Bacteria"/>
</dbReference>
<dbReference type="HOGENOM" id="CLU_036235_2_1_7"/>
<dbReference type="Proteomes" id="UP000002710">
    <property type="component" value="Chromosome"/>
</dbReference>
<dbReference type="GO" id="GO:0015934">
    <property type="term" value="C:large ribosomal subunit"/>
    <property type="evidence" value="ECO:0007669"/>
    <property type="project" value="InterPro"/>
</dbReference>
<dbReference type="GO" id="GO:0019843">
    <property type="term" value="F:rRNA binding"/>
    <property type="evidence" value="ECO:0007669"/>
    <property type="project" value="UniProtKB-UniRule"/>
</dbReference>
<dbReference type="GO" id="GO:0003735">
    <property type="term" value="F:structural constituent of ribosome"/>
    <property type="evidence" value="ECO:0007669"/>
    <property type="project" value="InterPro"/>
</dbReference>
<dbReference type="GO" id="GO:0016740">
    <property type="term" value="F:transferase activity"/>
    <property type="evidence" value="ECO:0007669"/>
    <property type="project" value="InterPro"/>
</dbReference>
<dbReference type="GO" id="GO:0002181">
    <property type="term" value="P:cytoplasmic translation"/>
    <property type="evidence" value="ECO:0007669"/>
    <property type="project" value="TreeGrafter"/>
</dbReference>
<dbReference type="FunFam" id="2.30.30.30:FF:000001">
    <property type="entry name" value="50S ribosomal protein L2"/>
    <property type="match status" value="1"/>
</dbReference>
<dbReference type="FunFam" id="2.40.50.140:FF:000003">
    <property type="entry name" value="50S ribosomal protein L2"/>
    <property type="match status" value="1"/>
</dbReference>
<dbReference type="FunFam" id="4.10.950.10:FF:000001">
    <property type="entry name" value="50S ribosomal protein L2"/>
    <property type="match status" value="1"/>
</dbReference>
<dbReference type="Gene3D" id="2.30.30.30">
    <property type="match status" value="1"/>
</dbReference>
<dbReference type="Gene3D" id="2.40.50.140">
    <property type="entry name" value="Nucleic acid-binding proteins"/>
    <property type="match status" value="1"/>
</dbReference>
<dbReference type="Gene3D" id="4.10.950.10">
    <property type="entry name" value="Ribosomal protein L2, domain 3"/>
    <property type="match status" value="1"/>
</dbReference>
<dbReference type="HAMAP" id="MF_01320_B">
    <property type="entry name" value="Ribosomal_uL2_B"/>
    <property type="match status" value="1"/>
</dbReference>
<dbReference type="InterPro" id="IPR012340">
    <property type="entry name" value="NA-bd_OB-fold"/>
</dbReference>
<dbReference type="InterPro" id="IPR014722">
    <property type="entry name" value="Rib_uL2_dom2"/>
</dbReference>
<dbReference type="InterPro" id="IPR002171">
    <property type="entry name" value="Ribosomal_uL2"/>
</dbReference>
<dbReference type="InterPro" id="IPR005880">
    <property type="entry name" value="Ribosomal_uL2_bac/org-type"/>
</dbReference>
<dbReference type="InterPro" id="IPR022669">
    <property type="entry name" value="Ribosomal_uL2_C"/>
</dbReference>
<dbReference type="InterPro" id="IPR022671">
    <property type="entry name" value="Ribosomal_uL2_CS"/>
</dbReference>
<dbReference type="InterPro" id="IPR014726">
    <property type="entry name" value="Ribosomal_uL2_dom3"/>
</dbReference>
<dbReference type="InterPro" id="IPR022666">
    <property type="entry name" value="Ribosomal_uL2_RNA-bd_dom"/>
</dbReference>
<dbReference type="InterPro" id="IPR008991">
    <property type="entry name" value="Translation_prot_SH3-like_sf"/>
</dbReference>
<dbReference type="NCBIfam" id="TIGR01171">
    <property type="entry name" value="rplB_bact"/>
    <property type="match status" value="1"/>
</dbReference>
<dbReference type="PANTHER" id="PTHR13691:SF5">
    <property type="entry name" value="LARGE RIBOSOMAL SUBUNIT PROTEIN UL2M"/>
    <property type="match status" value="1"/>
</dbReference>
<dbReference type="PANTHER" id="PTHR13691">
    <property type="entry name" value="RIBOSOMAL PROTEIN L2"/>
    <property type="match status" value="1"/>
</dbReference>
<dbReference type="Pfam" id="PF00181">
    <property type="entry name" value="Ribosomal_L2"/>
    <property type="match status" value="1"/>
</dbReference>
<dbReference type="Pfam" id="PF03947">
    <property type="entry name" value="Ribosomal_L2_C"/>
    <property type="match status" value="1"/>
</dbReference>
<dbReference type="PIRSF" id="PIRSF002158">
    <property type="entry name" value="Ribosomal_L2"/>
    <property type="match status" value="1"/>
</dbReference>
<dbReference type="SMART" id="SM01383">
    <property type="entry name" value="Ribosomal_L2"/>
    <property type="match status" value="1"/>
</dbReference>
<dbReference type="SMART" id="SM01382">
    <property type="entry name" value="Ribosomal_L2_C"/>
    <property type="match status" value="1"/>
</dbReference>
<dbReference type="SUPFAM" id="SSF50249">
    <property type="entry name" value="Nucleic acid-binding proteins"/>
    <property type="match status" value="1"/>
</dbReference>
<dbReference type="SUPFAM" id="SSF50104">
    <property type="entry name" value="Translation proteins SH3-like domain"/>
    <property type="match status" value="1"/>
</dbReference>
<dbReference type="PROSITE" id="PS00467">
    <property type="entry name" value="RIBOSOMAL_L2"/>
    <property type="match status" value="1"/>
</dbReference>
<gene>
    <name evidence="1" type="primary">rplB</name>
    <name type="ordered locus">Dde_2254</name>
</gene>
<comment type="function">
    <text evidence="1">One of the primary rRNA binding proteins. Required for association of the 30S and 50S subunits to form the 70S ribosome, for tRNA binding and peptide bond formation. It has been suggested to have peptidyltransferase activity; this is somewhat controversial. Makes several contacts with the 16S rRNA in the 70S ribosome.</text>
</comment>
<comment type="subunit">
    <text evidence="1">Part of the 50S ribosomal subunit. Forms a bridge to the 30S subunit in the 70S ribosome.</text>
</comment>
<comment type="similarity">
    <text evidence="1">Belongs to the universal ribosomal protein uL2 family.</text>
</comment>
<sequence length="276" mass="30263">MAVRKLKPTSPGRRFQTVSSFEEITRSTPERSLTEGLTKKSGRNCYGRVTSRRRGGGHKRLYRIIDFRRDKVGVPAKVAHVEYDPNRSARIALLHYSDGEKRYILAPLGVKQGDVVVAGDSVDIKPGNAMALSRVPVGTIVHNIELYPGKGGQFCRAAGTYAQLVAKEGNYALLRMPSGEVRKVLVTCCATIGQVGNLDHEKISYGKAGRSRWLGRRPKVRGVAMNPIDHPLGGGEGRSSGGRHPVTPWGIPTKGFKTRDKKKASSKLIIKRRGQK</sequence>
<feature type="chain" id="PRO_0000237180" description="Large ribosomal subunit protein uL2">
    <location>
        <begin position="1"/>
        <end position="276"/>
    </location>
</feature>
<feature type="region of interest" description="Disordered" evidence="2">
    <location>
        <begin position="26"/>
        <end position="45"/>
    </location>
</feature>
<feature type="region of interest" description="Disordered" evidence="2">
    <location>
        <begin position="224"/>
        <end position="276"/>
    </location>
</feature>
<feature type="compositionally biased region" description="Basic residues" evidence="2">
    <location>
        <begin position="259"/>
        <end position="276"/>
    </location>
</feature>
<accession>Q30Z45</accession>
<evidence type="ECO:0000255" key="1">
    <source>
        <dbReference type="HAMAP-Rule" id="MF_01320"/>
    </source>
</evidence>
<evidence type="ECO:0000256" key="2">
    <source>
        <dbReference type="SAM" id="MobiDB-lite"/>
    </source>
</evidence>
<evidence type="ECO:0000305" key="3"/>
<keyword id="KW-1185">Reference proteome</keyword>
<keyword id="KW-0687">Ribonucleoprotein</keyword>
<keyword id="KW-0689">Ribosomal protein</keyword>
<keyword id="KW-0694">RNA-binding</keyword>
<keyword id="KW-0699">rRNA-binding</keyword>
<organism>
    <name type="scientific">Oleidesulfovibrio alaskensis (strain ATCC BAA-1058 / DSM 17464 / G20)</name>
    <name type="common">Desulfovibrio alaskensis</name>
    <dbReference type="NCBI Taxonomy" id="207559"/>
    <lineage>
        <taxon>Bacteria</taxon>
        <taxon>Pseudomonadati</taxon>
        <taxon>Thermodesulfobacteriota</taxon>
        <taxon>Desulfovibrionia</taxon>
        <taxon>Desulfovibrionales</taxon>
        <taxon>Desulfovibrionaceae</taxon>
        <taxon>Oleidesulfovibrio</taxon>
    </lineage>
</organism>
<proteinExistence type="inferred from homology"/>
<reference key="1">
    <citation type="journal article" date="2011" name="J. Bacteriol.">
        <title>Complete genome sequence and updated annotation of Desulfovibrio alaskensis G20.</title>
        <authorList>
            <person name="Hauser L.J."/>
            <person name="Land M.L."/>
            <person name="Brown S.D."/>
            <person name="Larimer F."/>
            <person name="Keller K.L."/>
            <person name="Rapp-Giles B.J."/>
            <person name="Price M.N."/>
            <person name="Lin M."/>
            <person name="Bruce D.C."/>
            <person name="Detter J.C."/>
            <person name="Tapia R."/>
            <person name="Han C.S."/>
            <person name="Goodwin L.A."/>
            <person name="Cheng J.F."/>
            <person name="Pitluck S."/>
            <person name="Copeland A."/>
            <person name="Lucas S."/>
            <person name="Nolan M."/>
            <person name="Lapidus A.L."/>
            <person name="Palumbo A.V."/>
            <person name="Wall J.D."/>
        </authorList>
    </citation>
    <scope>NUCLEOTIDE SEQUENCE [LARGE SCALE GENOMIC DNA]</scope>
    <source>
        <strain>ATCC BAA-1058 / DSM 17464 / G20</strain>
    </source>
</reference>